<comment type="function">
    <text evidence="2 4 7 8 9 10">Microtubule inner protein (MIP) part of the dynein-decorated doublet microtubules (DMTs) in cilia axoneme, which is required for motile cilia beating (PubMed:37295417, PubMed:37865089, PubMed:37989994). May play a role in the control of meiotic division and germ cell differentiation through regulation of pairing and recombination during meiosis. Required for sperm flagella assembly (PubMed:22396656). May play a role in the assembly and function of the outer dynein arm-docking complex (ODA-DC). ODA-DC mediates outer dynein arms (ODA) binding onto the axonemal doublet microtubules (By similarity).</text>
</comment>
<comment type="subunit">
    <text evidence="2 4 6 7 8 9">Able to form oligomers (PubMed:22396656). Microtubule inner protein component of sperm flagellar doublet microtubules (PubMed:37295417, PubMed:37865089, PubMed:37989994). Interacts with ODAD1 (By similarity). Interacts with BBOF1 (PubMed:37198331).</text>
</comment>
<comment type="subcellular location">
    <subcellularLocation>
        <location evidence="10">Nucleus</location>
    </subcellularLocation>
    <subcellularLocation>
        <location evidence="4 6 7 8 9">Cytoplasm</location>
        <location evidence="4 6 7 8 9">Cytoskeleton</location>
        <location evidence="4 6 7 8 9">Flagellum axoneme</location>
    </subcellularLocation>
    <subcellularLocation>
        <location evidence="2">Cytoplasm</location>
        <location evidence="2">Cytoskeleton</location>
        <location evidence="2">Cilium axoneme</location>
    </subcellularLocation>
    <text evidence="1">Microtubule inner protein (MIP) part of the dynein-decorated doublet microtubules (DMTs) in cilia axoneme.</text>
</comment>
<comment type="tissue specificity">
    <text evidence="4 10">High expression in testis (PubMed:22396656). Expressed in pachytene spermatocytes and post-meiotic spermatids (PubMed:22396656, PubMed:8032679).</text>
</comment>
<comment type="developmental stage">
    <text evidence="5">Expressed in the ventral embryonic node at developmental stage 8 dpc.</text>
</comment>
<comment type="disruption phenotype">
    <text evidence="4">MNS1-deficient mice display situs inversus and hydrocephalus. They are sterile, exhibit a sharp reduction in sperm production, and remnant spermatozoa are immotile with abnormal short tails.</text>
</comment>
<comment type="similarity">
    <text evidence="11">Belongs to the MNS1 family.</text>
</comment>
<sequence>MATKKRALSFSEKHQKLVDEKFRKSLNIQVMNKLERQAKNQVVQNENDEKVERQRFLRVLQNEQFELDMEEAIQKAEANKMLRDRQLEQEERLANELARLKHESLKDKKMRQQVRENSIELRELEQKLKAAYMNKERAAQIVEKDAMKYEQMKRDAEIERIMMEEHDRLLKEESAKQERRNKERAQYYLDLEKQLEDQERRKQEAYEQLLKEKLMIDEIVRKIYEEDQVERQQKLEKKNAIQKYIEEFQRAQDFWRQKKREEMEEENRKIIEFANIQEQREGERMARVHEIEEKRVQRQNLLMKQLEETLRQRDDLEQVRQELYQEEQAEIIKLKVKEEAELRLRRQREMKQDFEDQMALKELILQAAKEEEETFKKAMLAKFAEDDRIELMNAQKQRMKQLEHKRAVEKLIEERRSQFLADKQRELEELQLQQRRQGCINEIIEEERLRLLKEHAAKLLGYLPKGVFKREDDVDMLGEEFRKAYQKRDGV</sequence>
<protein>
    <recommendedName>
        <fullName>Meiosis-specific nuclear structural protein 1</fullName>
    </recommendedName>
</protein>
<evidence type="ECO:0000250" key="1">
    <source>
        <dbReference type="UniProtKB" id="Q2KIQ2"/>
    </source>
</evidence>
<evidence type="ECO:0000250" key="2">
    <source>
        <dbReference type="UniProtKB" id="Q8NEH6"/>
    </source>
</evidence>
<evidence type="ECO:0000255" key="3"/>
<evidence type="ECO:0000269" key="4">
    <source>
    </source>
</evidence>
<evidence type="ECO:0000269" key="5">
    <source>
    </source>
</evidence>
<evidence type="ECO:0000269" key="6">
    <source>
    </source>
</evidence>
<evidence type="ECO:0000269" key="7">
    <source>
    </source>
</evidence>
<evidence type="ECO:0000269" key="8">
    <source>
    </source>
</evidence>
<evidence type="ECO:0000269" key="9">
    <source>
    </source>
</evidence>
<evidence type="ECO:0000269" key="10">
    <source>
    </source>
</evidence>
<evidence type="ECO:0000305" key="11"/>
<evidence type="ECO:0007744" key="12">
    <source>
        <dbReference type="PDB" id="8I7R"/>
    </source>
</evidence>
<evidence type="ECO:0007744" key="13">
    <source>
        <dbReference type="PDB" id="8IYJ"/>
    </source>
</evidence>
<evidence type="ECO:0007744" key="14">
    <source>
        <dbReference type="PDB" id="8TO0"/>
    </source>
</evidence>
<evidence type="ECO:0007744" key="15">
    <source>
    </source>
</evidence>
<gene>
    <name type="primary">Mns1</name>
</gene>
<name>MNS1_MOUSE</name>
<proteinExistence type="evidence at protein level"/>
<feature type="chain" id="PRO_0000298923" description="Meiosis-specific nuclear structural protein 1">
    <location>
        <begin position="1"/>
        <end position="491"/>
    </location>
</feature>
<feature type="region of interest" description="Interaction with BBOF1" evidence="6">
    <location>
        <begin position="1"/>
        <end position="314"/>
    </location>
</feature>
<feature type="coiled-coil region" evidence="3">
    <location>
        <begin position="29"/>
        <end position="253"/>
    </location>
</feature>
<feature type="coiled-coil region" evidence="3">
    <location>
        <begin position="287"/>
        <end position="410"/>
    </location>
</feature>
<feature type="modified residue" description="Phosphotyrosine" evidence="15">
    <location>
        <position position="188"/>
    </location>
</feature>
<reference key="1">
    <citation type="journal article" date="1994" name="Chromosome Res.">
        <title>cDNA cloning and functional characterization of a meiosis-specific nuclear structural protein (MNS1).</title>
        <authorList>
            <person name="Furukawa K."/>
            <person name="Inagaki H."/>
            <person name="Naruge T."/>
            <person name="Tabata S."/>
            <person name="Tomida T."/>
            <person name="Yamaguchi A."/>
            <person name="Yoshikuni M."/>
            <person name="Nagahama Y."/>
            <person name="Hotta Y."/>
        </authorList>
    </citation>
    <scope>NUCLEOTIDE SEQUENCE [MRNA]</scope>
    <scope>FUNCTION</scope>
    <scope>SUBCELLULAR LOCATION</scope>
    <scope>TISSUE SPECIFICITY</scope>
    <source>
        <strain>ddY</strain>
        <tissue>Testis</tissue>
    </source>
</reference>
<reference key="2">
    <citation type="journal article" date="2004" name="Genome Res.">
        <title>The status, quality, and expansion of the NIH full-length cDNA project: the Mammalian Gene Collection (MGC).</title>
        <authorList>
            <consortium name="The MGC Project Team"/>
        </authorList>
    </citation>
    <scope>NUCLEOTIDE SEQUENCE [LARGE SCALE MRNA]</scope>
    <source>
        <tissue>Olfactory epithelium</tissue>
    </source>
</reference>
<reference key="3">
    <citation type="journal article" date="2009" name="Immunity">
        <title>The phagosomal proteome in interferon-gamma-activated macrophages.</title>
        <authorList>
            <person name="Trost M."/>
            <person name="English L."/>
            <person name="Lemieux S."/>
            <person name="Courcelles M."/>
            <person name="Desjardins M."/>
            <person name="Thibault P."/>
        </authorList>
    </citation>
    <scope>PHOSPHORYLATION [LARGE SCALE ANALYSIS] AT TYR-188</scope>
    <scope>IDENTIFICATION BY MASS SPECTROMETRY [LARGE SCALE ANALYSIS]</scope>
</reference>
<reference key="4">
    <citation type="journal article" date="2010" name="Cell">
        <title>A tissue-specific atlas of mouse protein phosphorylation and expression.</title>
        <authorList>
            <person name="Huttlin E.L."/>
            <person name="Jedrychowski M.P."/>
            <person name="Elias J.E."/>
            <person name="Goswami T."/>
            <person name="Rad R."/>
            <person name="Beausoleil S.A."/>
            <person name="Villen J."/>
            <person name="Haas W."/>
            <person name="Sowa M.E."/>
            <person name="Gygi S.P."/>
        </authorList>
    </citation>
    <scope>IDENTIFICATION BY MASS SPECTROMETRY [LARGE SCALE ANALYSIS]</scope>
    <source>
        <tissue>Testis</tissue>
    </source>
</reference>
<reference key="5">
    <citation type="journal article" date="2012" name="PLoS Genet.">
        <title>MNS1 is essential for spermiogenesis and motile ciliary functions in mice.</title>
        <authorList>
            <person name="Zhou J."/>
            <person name="Yang F."/>
            <person name="Leu N.A."/>
            <person name="Wang P.J."/>
        </authorList>
    </citation>
    <scope>FUNCTION</scope>
    <scope>TISSUE SPECIFICITY</scope>
    <scope>SUBCELLULAR LOCATION</scope>
    <scope>SUBUNIT</scope>
    <scope>DISRUPTION PHENOTYPE</scope>
</reference>
<reference key="6">
    <citation type="journal article" date="2018" name="PLoS Genet.">
        <title>Homozygous loss-of-function mutations in MNS1 cause laterality defects and likely male infertility.</title>
        <authorList>
            <person name="Ta-Shma A."/>
            <person name="Hjeij R."/>
            <person name="Perles Z."/>
            <person name="Dougherty G.W."/>
            <person name="Abu Zahira I."/>
            <person name="Letteboer S.J.F."/>
            <person name="Antony D."/>
            <person name="Darwish A."/>
            <person name="Mans D.A."/>
            <person name="Spittler S."/>
            <person name="Edelbusch C."/>
            <person name="Cindric S."/>
            <person name="Noethe-Menchen T."/>
            <person name="Olbrich H."/>
            <person name="Stuhlmann F."/>
            <person name="Aprea I."/>
            <person name="Pennekamp P."/>
            <person name="Loges N.T."/>
            <person name="Breuer O."/>
            <person name="Shaag A."/>
            <person name="Rein A.J.J.T."/>
            <person name="Gulec E.Y."/>
            <person name="Gezdirici A."/>
            <person name="Abitbul R."/>
            <person name="Elias N."/>
            <person name="Amirav I."/>
            <person name="Schmidts M."/>
            <person name="Roepman R."/>
            <person name="Elpeleg O."/>
            <person name="Omran H."/>
        </authorList>
    </citation>
    <scope>DEVELOPMENTAL STAGE</scope>
</reference>
<reference key="7">
    <citation type="journal article" date="2023" name="Cell. Mol. Life Sci.">
        <title>BBOF1 is required for sperm motility and male fertility by stabilizing the flagellar axoneme in mice.</title>
        <authorList>
            <person name="Cao H."/>
            <person name="Xu H."/>
            <person name="Zhou Y."/>
            <person name="Xu W."/>
            <person name="Lu Q."/>
            <person name="Jiang L."/>
            <person name="Rong Y."/>
            <person name="Zhang Q."/>
            <person name="Yu C."/>
        </authorList>
    </citation>
    <scope>SUBCELLULAR LOCATION</scope>
    <scope>INTERACTION WITH BBOF1</scope>
</reference>
<reference evidence="13" key="8">
    <citation type="journal article" date="2023" name="Cell">
        <title>Structures of sperm flagellar doublet microtubules expand the genetic spectrum of male infertility.</title>
        <authorList>
            <person name="Zhou L."/>
            <person name="Liu H."/>
            <person name="Liu S."/>
            <person name="Yang X."/>
            <person name="Dong Y."/>
            <person name="Pan Y."/>
            <person name="Xiao Z."/>
            <person name="Zheng B."/>
            <person name="Sun Y."/>
            <person name="Huang P."/>
            <person name="Zhang X."/>
            <person name="Hu J."/>
            <person name="Sun R."/>
            <person name="Feng S."/>
            <person name="Zhu Y."/>
            <person name="Liu M."/>
            <person name="Gui M."/>
            <person name="Wu J."/>
        </authorList>
    </citation>
    <scope>STRUCTURE BY ELECTRON MICROSCOPY (3.50 ANGSTROMS) OF SPERM FLAGELLAR DOUBLET MICROTUBULES</scope>
    <scope>FUNCTION</scope>
    <scope>SUBCELLULAR LOCATION</scope>
    <scope>SUBUNIT</scope>
</reference>
<reference evidence="14" key="9">
    <citation type="journal article" date="2023" name="Cell">
        <title>De novo protein identification in mammalian sperm using in situ cryoelectron tomography and AlphaFold2 docking.</title>
        <authorList>
            <person name="Chen Z."/>
            <person name="Shiozaki M."/>
            <person name="Haas K.M."/>
            <person name="Skinner W.M."/>
            <person name="Zhao S."/>
            <person name="Guo C."/>
            <person name="Polacco B.J."/>
            <person name="Yu Z."/>
            <person name="Krogan N.J."/>
            <person name="Lishko P.V."/>
            <person name="Kaake R.M."/>
            <person name="Vale R.D."/>
            <person name="Agard D.A."/>
        </authorList>
    </citation>
    <scope>STRUCTURE BY ELECTRON MICROSCOPY (7.70 ANGSTROMS) OF SPERM FLAGELLAR DOUBLET MICROTUBULES</scope>
    <scope>FUNCTION</scope>
    <scope>SUBCELLULAR LOCATION</scope>
    <scope>SUBUNIT</scope>
</reference>
<reference evidence="12" key="10">
    <citation type="journal article" date="2023" name="Cell Discov.">
        <title>In-cell structural insight into the stability of sperm microtubule doublet.</title>
        <authorList>
            <person name="Tai L."/>
            <person name="Yin G."/>
            <person name="Huang X."/>
            <person name="Sun F."/>
            <person name="Zhu Y."/>
        </authorList>
    </citation>
    <scope>STRUCTURE BY ELECTRON MICROSCOPY (4.50 ANGSTROMS)</scope>
    <scope>FUNCTION</scope>
    <scope>SUBUNIT</scope>
    <scope>SUBCELLULAR LOCATION</scope>
</reference>
<dbReference type="EMBL" id="BC046624">
    <property type="protein sequence ID" value="AAH46624.1"/>
    <property type="molecule type" value="mRNA"/>
</dbReference>
<dbReference type="EMBL" id="D14849">
    <property type="protein sequence ID" value="BAA03577.1"/>
    <property type="molecule type" value="mRNA"/>
</dbReference>
<dbReference type="CCDS" id="CCDS40684.1"/>
<dbReference type="RefSeq" id="NP_032639.1">
    <property type="nucleotide sequence ID" value="NM_008613.4"/>
</dbReference>
<dbReference type="PDB" id="8I7R">
    <property type="method" value="EM"/>
    <property type="resolution" value="6.50 A"/>
    <property type="chains" value="A/B=1-491"/>
</dbReference>
<dbReference type="PDB" id="8IYJ">
    <property type="method" value="EM"/>
    <property type="resolution" value="3.50 A"/>
    <property type="chains" value="B/C=1-491"/>
</dbReference>
<dbReference type="PDB" id="8TO0">
    <property type="method" value="EM"/>
    <property type="resolution" value="7.70 A"/>
    <property type="chains" value="A/a=1-491"/>
</dbReference>
<dbReference type="PDBsum" id="8I7R"/>
<dbReference type="PDBsum" id="8IYJ"/>
<dbReference type="PDBsum" id="8TO0"/>
<dbReference type="EMDB" id="EMD-35230"/>
<dbReference type="EMDB" id="EMD-35823"/>
<dbReference type="EMDB" id="EMD-41431"/>
<dbReference type="SMR" id="Q61884"/>
<dbReference type="FunCoup" id="Q61884">
    <property type="interactions" value="161"/>
</dbReference>
<dbReference type="STRING" id="10090.ENSMUSP00000034746"/>
<dbReference type="iPTMnet" id="Q61884"/>
<dbReference type="PhosphoSitePlus" id="Q61884"/>
<dbReference type="SwissPalm" id="Q61884"/>
<dbReference type="PaxDb" id="10090-ENSMUSP00000034746"/>
<dbReference type="ProteomicsDB" id="290284"/>
<dbReference type="Antibodypedia" id="42705">
    <property type="antibodies" value="118 antibodies from 17 providers"/>
</dbReference>
<dbReference type="Ensembl" id="ENSMUST00000034746.10">
    <property type="protein sequence ID" value="ENSMUSP00000034746.8"/>
    <property type="gene ID" value="ENSMUSG00000032221.15"/>
</dbReference>
<dbReference type="GeneID" id="17427"/>
<dbReference type="KEGG" id="mmu:17427"/>
<dbReference type="UCSC" id="uc009qpx.2">
    <property type="organism name" value="mouse"/>
</dbReference>
<dbReference type="AGR" id="MGI:107933"/>
<dbReference type="CTD" id="55329"/>
<dbReference type="MGI" id="MGI:107933">
    <property type="gene designation" value="Mns1"/>
</dbReference>
<dbReference type="VEuPathDB" id="HostDB:ENSMUSG00000032221"/>
<dbReference type="eggNOG" id="ENOG502QS9D">
    <property type="taxonomic scope" value="Eukaryota"/>
</dbReference>
<dbReference type="GeneTree" id="ENSGT00730000111210"/>
<dbReference type="HOGENOM" id="CLU_034848_0_0_1"/>
<dbReference type="InParanoid" id="Q61884"/>
<dbReference type="OMA" id="QIRNQMV"/>
<dbReference type="OrthoDB" id="197839at2759"/>
<dbReference type="PhylomeDB" id="Q61884"/>
<dbReference type="TreeFam" id="TF329219"/>
<dbReference type="BioGRID-ORCS" id="17427">
    <property type="hits" value="0 hits in 78 CRISPR screens"/>
</dbReference>
<dbReference type="PRO" id="PR:Q61884"/>
<dbReference type="Proteomes" id="UP000000589">
    <property type="component" value="Chromosome 9"/>
</dbReference>
<dbReference type="RNAct" id="Q61884">
    <property type="molecule type" value="protein"/>
</dbReference>
<dbReference type="Bgee" id="ENSMUSG00000032221">
    <property type="expression patterns" value="Expressed in seminiferous tubule of testis and 191 other cell types or tissues"/>
</dbReference>
<dbReference type="ExpressionAtlas" id="Q61884">
    <property type="expression patterns" value="baseline and differential"/>
</dbReference>
<dbReference type="GO" id="GO:0160111">
    <property type="term" value="C:axonemal A tubule inner sheath"/>
    <property type="evidence" value="ECO:0000314"/>
    <property type="project" value="UniProtKB"/>
</dbReference>
<dbReference type="GO" id="GO:0005879">
    <property type="term" value="C:axonemal microtubule"/>
    <property type="evidence" value="ECO:0000250"/>
    <property type="project" value="UniProtKB"/>
</dbReference>
<dbReference type="GO" id="GO:0005930">
    <property type="term" value="C:axoneme"/>
    <property type="evidence" value="ECO:0000314"/>
    <property type="project" value="UniProtKB"/>
</dbReference>
<dbReference type="GO" id="GO:0036064">
    <property type="term" value="C:ciliary basal body"/>
    <property type="evidence" value="ECO:0007669"/>
    <property type="project" value="Ensembl"/>
</dbReference>
<dbReference type="GO" id="GO:0005829">
    <property type="term" value="C:cytosol"/>
    <property type="evidence" value="ECO:0007669"/>
    <property type="project" value="Ensembl"/>
</dbReference>
<dbReference type="GO" id="GO:0005882">
    <property type="term" value="C:intermediate filament"/>
    <property type="evidence" value="ECO:0000314"/>
    <property type="project" value="MGI"/>
</dbReference>
<dbReference type="GO" id="GO:0005635">
    <property type="term" value="C:nuclear envelope"/>
    <property type="evidence" value="ECO:0000314"/>
    <property type="project" value="MGI"/>
</dbReference>
<dbReference type="GO" id="GO:0016607">
    <property type="term" value="C:nuclear speck"/>
    <property type="evidence" value="ECO:0007669"/>
    <property type="project" value="Ensembl"/>
</dbReference>
<dbReference type="GO" id="GO:0036126">
    <property type="term" value="C:sperm flagellum"/>
    <property type="evidence" value="ECO:0000314"/>
    <property type="project" value="UniProtKB"/>
</dbReference>
<dbReference type="GO" id="GO:0042802">
    <property type="term" value="F:identical protein binding"/>
    <property type="evidence" value="ECO:0000266"/>
    <property type="project" value="MGI"/>
</dbReference>
<dbReference type="GO" id="GO:0044782">
    <property type="term" value="P:cilium organization"/>
    <property type="evidence" value="ECO:0000315"/>
    <property type="project" value="MGI"/>
</dbReference>
<dbReference type="GO" id="GO:0030317">
    <property type="term" value="P:flagellated sperm motility"/>
    <property type="evidence" value="ECO:0000314"/>
    <property type="project" value="UniProtKB"/>
</dbReference>
<dbReference type="GO" id="GO:0070986">
    <property type="term" value="P:left/right axis specification"/>
    <property type="evidence" value="ECO:0000315"/>
    <property type="project" value="MGI"/>
</dbReference>
<dbReference type="GO" id="GO:0051321">
    <property type="term" value="P:meiotic cell cycle"/>
    <property type="evidence" value="ECO:0007669"/>
    <property type="project" value="UniProtKB-KW"/>
</dbReference>
<dbReference type="GO" id="GO:0045724">
    <property type="term" value="P:positive regulation of cilium assembly"/>
    <property type="evidence" value="ECO:0000315"/>
    <property type="project" value="CACAO"/>
</dbReference>
<dbReference type="GO" id="GO:0007288">
    <property type="term" value="P:sperm axoneme assembly"/>
    <property type="evidence" value="ECO:0000315"/>
    <property type="project" value="UniProtKB"/>
</dbReference>
<dbReference type="GO" id="GO:0007283">
    <property type="term" value="P:spermatogenesis"/>
    <property type="evidence" value="ECO:0000315"/>
    <property type="project" value="CACAO"/>
</dbReference>
<dbReference type="InterPro" id="IPR026504">
    <property type="entry name" value="MNS1"/>
</dbReference>
<dbReference type="InterPro" id="IPR043597">
    <property type="entry name" value="TPH_dom"/>
</dbReference>
<dbReference type="PANTHER" id="PTHR19265">
    <property type="entry name" value="MEIOSIS-SPECIFIC NUCLEAR STRUCTURAL PROTEIN 1"/>
    <property type="match status" value="1"/>
</dbReference>
<dbReference type="PANTHER" id="PTHR19265:SF0">
    <property type="entry name" value="MEIOSIS-SPECIFIC NUCLEAR STRUCTURAL PROTEIN 1"/>
    <property type="match status" value="1"/>
</dbReference>
<dbReference type="Pfam" id="PF13868">
    <property type="entry name" value="TPH"/>
    <property type="match status" value="1"/>
</dbReference>
<organism>
    <name type="scientific">Mus musculus</name>
    <name type="common">Mouse</name>
    <dbReference type="NCBI Taxonomy" id="10090"/>
    <lineage>
        <taxon>Eukaryota</taxon>
        <taxon>Metazoa</taxon>
        <taxon>Chordata</taxon>
        <taxon>Craniata</taxon>
        <taxon>Vertebrata</taxon>
        <taxon>Euteleostomi</taxon>
        <taxon>Mammalia</taxon>
        <taxon>Eutheria</taxon>
        <taxon>Euarchontoglires</taxon>
        <taxon>Glires</taxon>
        <taxon>Rodentia</taxon>
        <taxon>Myomorpha</taxon>
        <taxon>Muroidea</taxon>
        <taxon>Muridae</taxon>
        <taxon>Murinae</taxon>
        <taxon>Mus</taxon>
        <taxon>Mus</taxon>
    </lineage>
</organism>
<keyword id="KW-0002">3D-structure</keyword>
<keyword id="KW-0966">Cell projection</keyword>
<keyword id="KW-0969">Cilium</keyword>
<keyword id="KW-0175">Coiled coil</keyword>
<keyword id="KW-0963">Cytoplasm</keyword>
<keyword id="KW-0206">Cytoskeleton</keyword>
<keyword id="KW-0282">Flagellum</keyword>
<keyword id="KW-0469">Meiosis</keyword>
<keyword id="KW-0539">Nucleus</keyword>
<keyword id="KW-0597">Phosphoprotein</keyword>
<keyword id="KW-1185">Reference proteome</keyword>
<accession>Q61884</accession>